<name>RL14_SYNJB</name>
<accession>Q2JIL7</accession>
<reference key="1">
    <citation type="journal article" date="2007" name="ISME J.">
        <title>Population level functional diversity in a microbial community revealed by comparative genomic and metagenomic analyses.</title>
        <authorList>
            <person name="Bhaya D."/>
            <person name="Grossman A.R."/>
            <person name="Steunou A.-S."/>
            <person name="Khuri N."/>
            <person name="Cohan F.M."/>
            <person name="Hamamura N."/>
            <person name="Melendrez M.C."/>
            <person name="Bateson M.M."/>
            <person name="Ward D.M."/>
            <person name="Heidelberg J.F."/>
        </authorList>
    </citation>
    <scope>NUCLEOTIDE SEQUENCE [LARGE SCALE GENOMIC DNA]</scope>
    <source>
        <strain>JA-2-3B'a(2-13)</strain>
    </source>
</reference>
<gene>
    <name evidence="1" type="primary">rplN</name>
    <name evidence="1" type="synonym">rpl14</name>
    <name type="ordered locus">CYB_2607</name>
</gene>
<sequence length="122" mass="13383">MIQQQTMLTVADNTGARKMMCIRVLGSSGRRYASLGDVIIGVVKDALPNMPVKKSDVVKAVVIRTVDTVRRPDGMCIRFDDNAAVIINNDGNPRGTRVFGPVARELREKNFTKIISLAPEVL</sequence>
<evidence type="ECO:0000255" key="1">
    <source>
        <dbReference type="HAMAP-Rule" id="MF_01367"/>
    </source>
</evidence>
<evidence type="ECO:0000305" key="2"/>
<protein>
    <recommendedName>
        <fullName evidence="1">Large ribosomal subunit protein uL14</fullName>
    </recommendedName>
    <alternativeName>
        <fullName evidence="2">50S ribosomal protein L14</fullName>
    </alternativeName>
</protein>
<organism>
    <name type="scientific">Synechococcus sp. (strain JA-2-3B'a(2-13))</name>
    <name type="common">Cyanobacteria bacterium Yellowstone B-Prime</name>
    <dbReference type="NCBI Taxonomy" id="321332"/>
    <lineage>
        <taxon>Bacteria</taxon>
        <taxon>Bacillati</taxon>
        <taxon>Cyanobacteriota</taxon>
        <taxon>Cyanophyceae</taxon>
        <taxon>Synechococcales</taxon>
        <taxon>Synechococcaceae</taxon>
        <taxon>Synechococcus</taxon>
    </lineage>
</organism>
<feature type="chain" id="PRO_0000266570" description="Large ribosomal subunit protein uL14">
    <location>
        <begin position="1"/>
        <end position="122"/>
    </location>
</feature>
<dbReference type="EMBL" id="CP000240">
    <property type="protein sequence ID" value="ABD03537.1"/>
    <property type="molecule type" value="Genomic_DNA"/>
</dbReference>
<dbReference type="RefSeq" id="WP_011434162.1">
    <property type="nucleotide sequence ID" value="NC_007776.1"/>
</dbReference>
<dbReference type="SMR" id="Q2JIL7"/>
<dbReference type="STRING" id="321332.CYB_2607"/>
<dbReference type="KEGG" id="cyb:CYB_2607"/>
<dbReference type="eggNOG" id="COG0093">
    <property type="taxonomic scope" value="Bacteria"/>
</dbReference>
<dbReference type="HOGENOM" id="CLU_095071_2_1_3"/>
<dbReference type="OrthoDB" id="9806379at2"/>
<dbReference type="Proteomes" id="UP000001938">
    <property type="component" value="Chromosome"/>
</dbReference>
<dbReference type="GO" id="GO:0022625">
    <property type="term" value="C:cytosolic large ribosomal subunit"/>
    <property type="evidence" value="ECO:0007669"/>
    <property type="project" value="TreeGrafter"/>
</dbReference>
<dbReference type="GO" id="GO:0070180">
    <property type="term" value="F:large ribosomal subunit rRNA binding"/>
    <property type="evidence" value="ECO:0007669"/>
    <property type="project" value="TreeGrafter"/>
</dbReference>
<dbReference type="GO" id="GO:0003735">
    <property type="term" value="F:structural constituent of ribosome"/>
    <property type="evidence" value="ECO:0007669"/>
    <property type="project" value="InterPro"/>
</dbReference>
<dbReference type="GO" id="GO:0006412">
    <property type="term" value="P:translation"/>
    <property type="evidence" value="ECO:0007669"/>
    <property type="project" value="UniProtKB-UniRule"/>
</dbReference>
<dbReference type="CDD" id="cd00337">
    <property type="entry name" value="Ribosomal_uL14"/>
    <property type="match status" value="1"/>
</dbReference>
<dbReference type="FunFam" id="2.40.150.20:FF:000001">
    <property type="entry name" value="50S ribosomal protein L14"/>
    <property type="match status" value="1"/>
</dbReference>
<dbReference type="Gene3D" id="2.40.150.20">
    <property type="entry name" value="Ribosomal protein L14"/>
    <property type="match status" value="1"/>
</dbReference>
<dbReference type="HAMAP" id="MF_01367">
    <property type="entry name" value="Ribosomal_uL14"/>
    <property type="match status" value="1"/>
</dbReference>
<dbReference type="InterPro" id="IPR000218">
    <property type="entry name" value="Ribosomal_uL14"/>
</dbReference>
<dbReference type="InterPro" id="IPR005745">
    <property type="entry name" value="Ribosomal_uL14_bac-type"/>
</dbReference>
<dbReference type="InterPro" id="IPR019972">
    <property type="entry name" value="Ribosomal_uL14_CS"/>
</dbReference>
<dbReference type="InterPro" id="IPR036853">
    <property type="entry name" value="Ribosomal_uL14_sf"/>
</dbReference>
<dbReference type="NCBIfam" id="TIGR01067">
    <property type="entry name" value="rplN_bact"/>
    <property type="match status" value="1"/>
</dbReference>
<dbReference type="PANTHER" id="PTHR11761">
    <property type="entry name" value="50S/60S RIBOSOMAL PROTEIN L14/L23"/>
    <property type="match status" value="1"/>
</dbReference>
<dbReference type="PANTHER" id="PTHR11761:SF3">
    <property type="entry name" value="LARGE RIBOSOMAL SUBUNIT PROTEIN UL14M"/>
    <property type="match status" value="1"/>
</dbReference>
<dbReference type="Pfam" id="PF00238">
    <property type="entry name" value="Ribosomal_L14"/>
    <property type="match status" value="1"/>
</dbReference>
<dbReference type="SMART" id="SM01374">
    <property type="entry name" value="Ribosomal_L14"/>
    <property type="match status" value="1"/>
</dbReference>
<dbReference type="SUPFAM" id="SSF50193">
    <property type="entry name" value="Ribosomal protein L14"/>
    <property type="match status" value="1"/>
</dbReference>
<dbReference type="PROSITE" id="PS00049">
    <property type="entry name" value="RIBOSOMAL_L14"/>
    <property type="match status" value="1"/>
</dbReference>
<keyword id="KW-1185">Reference proteome</keyword>
<keyword id="KW-0687">Ribonucleoprotein</keyword>
<keyword id="KW-0689">Ribosomal protein</keyword>
<keyword id="KW-0694">RNA-binding</keyword>
<keyword id="KW-0699">rRNA-binding</keyword>
<proteinExistence type="inferred from homology"/>
<comment type="function">
    <text evidence="1">Binds to 23S rRNA. Forms part of two intersubunit bridges in the 70S ribosome.</text>
</comment>
<comment type="subunit">
    <text evidence="1">Part of the 50S ribosomal subunit. Forms a cluster with proteins L3 and L19. In the 70S ribosome, L14 and L19 interact and together make contacts with the 16S rRNA in bridges B5 and B8.</text>
</comment>
<comment type="similarity">
    <text evidence="1">Belongs to the universal ribosomal protein uL14 family.</text>
</comment>